<accession>A0A1R4LHH9</accession>
<sequence length="806" mass="87942">MKFTAIVGTTSPKSYNRTLLQFMQAHFKDKADIELLEIDQVPMFNQDQPSTNPQLLEINQKIIASDGVIIATPEYNHSIPSSLKSVLEWLSYELHPLDGKPVMILGASIDAQGSSRAQLHLRQILDAPGVNANVMPGYEFLLGNAHQAFDDKGQLNNEATIDFLEICFFRFMRFAKISNQLNVEEDFSFAPGTYEVHALGHGGALPMQVSFSEKKIESIHIDTAGETEGLADVVFVRIPDKIIEGQTLNVDALSGASETSHAVIDGVAKAVKLAGVNPDILKKRPKPASSLNRDDEEYSCDVVVIGGGGAGLSAAATVLQAGKNAIVLEKFPAVGGNTIRTGGPINAADPEWQRTFDENPGERHTIEALLSTDESEIHPEYLADFRALKEEFAAYQQQFGDQKGYLFDSPLLHRMQTYFGGKRTDLEGNSIYGQYDLVKILTDHALESVQWLEEIGVEYDKEVVFAPVGALWRRGHKPVKRYGTAFILALSRYIESMSGTILTDSPAKEFLIEDGEIKGVIATGVNGQKITIHAKAVVLASGGFGANTKMLQQYNTYWSHIADDIKTTNSYAMTGDGIVLGQSVGAGLIGMGFTQMMPVADPNTGELFSGLQVPPENFVIVNQQGKRFVNEFAGRDVLTKAALAEGGLFYLIADDEIKKTAANTSQEKIDRQVEAGTLFRADTLEELAVQVGMEPDVLVETINKYNRYVEAGHDPEFHKDTFSLKVEKAPFYATPRQPAVHHTMGGLKIDTATRVLNENNRPIKHLYAAGEVAGGIHAGNRLGGNALADIFTFGRIAGKTAMSEMD</sequence>
<keyword id="KW-0274">FAD</keyword>
<keyword id="KW-0285">Flavoprotein</keyword>
<keyword id="KW-0288">FMN</keyword>
<keyword id="KW-0520">NAD</keyword>
<keyword id="KW-0560">Oxidoreductase</keyword>
<keyword id="KW-0597">Phosphoprotein</keyword>
<keyword id="KW-1185">Reference proteome</keyword>
<reference key="1">
    <citation type="submission" date="2017-02" db="EMBL/GenBank/DDBJ databases">
        <authorList>
            <person name="Rodrigo-Torres L."/>
            <person name="Arahal R.D."/>
            <person name="Lucena T."/>
        </authorList>
    </citation>
    <scope>NUCLEOTIDE SEQUENCE [LARGE SCALE GENOMIC DNA]</scope>
    <source>
        <strain>DSM 16370 / JCM 11486 / BCRC 17186 / CECT 7878 / LMG 23124 / VR1</strain>
    </source>
</reference>
<reference key="2">
    <citation type="journal article" date="2024" name="Biochemistry (Mosc.)">
        <title>A Redox-Regulated, Heterodimeric NADH:cinnamate Reductase in Vibrio ruber.</title>
        <authorList>
            <person name="Bertsova Y.V."/>
            <person name="Serebryakova M.V."/>
            <person name="Anashkin V.A."/>
            <person name="Baykov A.A."/>
            <person name="Bogachev A.V."/>
        </authorList>
    </citation>
    <scope>FUNCTION</scope>
    <scope>CATALYTIC ACTIVITY</scope>
    <scope>SUBSTRATE SPECIFICITY</scope>
    <scope>COFACTOR</scope>
    <scope>BIOPHYSICOCHEMICAL PROPERTIES</scope>
    <scope>SUBUNIT</scope>
    <scope>FMN PROSTHETIC GROUP AT SER-257</scope>
    <scope>INDUCTION BY UNSATURATED CARBONIC ACIDS</scope>
    <scope>ACTIVITY REGULATION</scope>
    <scope>DOMAIN</scope>
    <source>
        <strain>DSM 16370 / JCM 11486 / BCRC 17186 / CECT 7878 / LMG 23124 / VR1</strain>
    </source>
</reference>
<feature type="chain" id="PRO_0000460735" description="NADH:(hydroxy)cinnamate reductase subunit CrdB">
    <location>
        <begin position="1"/>
        <end position="806"/>
    </location>
</feature>
<feature type="active site" description="Proton donor" evidence="1">
    <location>
        <position position="635"/>
    </location>
</feature>
<feature type="binding site" evidence="2">
    <location>
        <position position="310"/>
    </location>
    <ligand>
        <name>FAD</name>
        <dbReference type="ChEBI" id="CHEBI:57692"/>
    </ligand>
</feature>
<feature type="binding site" evidence="2">
    <location>
        <position position="329"/>
    </location>
    <ligand>
        <name>FAD</name>
        <dbReference type="ChEBI" id="CHEBI:57692"/>
    </ligand>
</feature>
<feature type="binding site" evidence="2">
    <location>
        <position position="337"/>
    </location>
    <ligand>
        <name>FAD</name>
        <dbReference type="ChEBI" id="CHEBI:57692"/>
    </ligand>
</feature>
<feature type="binding site" evidence="2">
    <location>
        <position position="338"/>
    </location>
    <ligand>
        <name>FAD</name>
        <dbReference type="ChEBI" id="CHEBI:57692"/>
    </ligand>
</feature>
<feature type="binding site" evidence="2">
    <location>
        <position position="342"/>
    </location>
    <ligand>
        <name>FAD</name>
        <dbReference type="ChEBI" id="CHEBI:57692"/>
    </ligand>
</feature>
<feature type="binding site" evidence="2">
    <location>
        <position position="343"/>
    </location>
    <ligand>
        <name>FAD</name>
        <dbReference type="ChEBI" id="CHEBI:57692"/>
    </ligand>
</feature>
<feature type="binding site" evidence="2">
    <location>
        <position position="576"/>
    </location>
    <ligand>
        <name>FAD</name>
        <dbReference type="ChEBI" id="CHEBI:57692"/>
    </ligand>
</feature>
<feature type="binding site" evidence="2">
    <location>
        <position position="742"/>
    </location>
    <ligand>
        <name>FAD</name>
        <dbReference type="ChEBI" id="CHEBI:57692"/>
    </ligand>
</feature>
<feature type="binding site" evidence="2">
    <location>
        <position position="771"/>
    </location>
    <ligand>
        <name>FAD</name>
        <dbReference type="ChEBI" id="CHEBI:57692"/>
    </ligand>
</feature>
<feature type="binding site" evidence="2">
    <location>
        <position position="786"/>
    </location>
    <ligand>
        <name>FAD</name>
        <dbReference type="ChEBI" id="CHEBI:57692"/>
    </ligand>
</feature>
<feature type="binding site" evidence="2">
    <location>
        <position position="787"/>
    </location>
    <ligand>
        <name>FAD</name>
        <dbReference type="ChEBI" id="CHEBI:57692"/>
    </ligand>
</feature>
<feature type="modified residue" description="FMN phosphoryl serine" evidence="3">
    <location>
        <position position="257"/>
    </location>
</feature>
<gene>
    <name evidence="4" type="primary">crdB</name>
    <name evidence="7" type="synonym">urdA</name>
    <name evidence="7" type="ORF">VR7878_01556</name>
</gene>
<evidence type="ECO:0000250" key="1">
    <source>
        <dbReference type="UniProtKB" id="P0C278"/>
    </source>
</evidence>
<evidence type="ECO:0000250" key="2">
    <source>
        <dbReference type="UniProtKB" id="P83223"/>
    </source>
</evidence>
<evidence type="ECO:0000269" key="3">
    <source>
    </source>
</evidence>
<evidence type="ECO:0000303" key="4">
    <source>
    </source>
</evidence>
<evidence type="ECO:0000305" key="5"/>
<evidence type="ECO:0000305" key="6">
    <source>
    </source>
</evidence>
<evidence type="ECO:0000312" key="7">
    <source>
        <dbReference type="EMBL" id="SJN56021.1"/>
    </source>
</evidence>
<name>CRDB_VIBR1</name>
<dbReference type="EC" id="1.3.1.-" evidence="3"/>
<dbReference type="EMBL" id="FULE01000022">
    <property type="protein sequence ID" value="SJN56021.1"/>
    <property type="molecule type" value="Genomic_DNA"/>
</dbReference>
<dbReference type="RefSeq" id="WP_077335000.1">
    <property type="nucleotide sequence ID" value="NZ_FULE01000022.1"/>
</dbReference>
<dbReference type="SMR" id="A0A1R4LHH9"/>
<dbReference type="STRING" id="1123498.VR7878_01556"/>
<dbReference type="OrthoDB" id="8523426at2"/>
<dbReference type="Proteomes" id="UP000188276">
    <property type="component" value="Unassembled WGS sequence"/>
</dbReference>
<dbReference type="GO" id="GO:0016020">
    <property type="term" value="C:membrane"/>
    <property type="evidence" value="ECO:0007669"/>
    <property type="project" value="InterPro"/>
</dbReference>
<dbReference type="GO" id="GO:0043786">
    <property type="term" value="F:cinnamate reductase activity"/>
    <property type="evidence" value="ECO:0007669"/>
    <property type="project" value="RHEA"/>
</dbReference>
<dbReference type="GO" id="GO:0010181">
    <property type="term" value="F:FMN binding"/>
    <property type="evidence" value="ECO:0007669"/>
    <property type="project" value="InterPro"/>
</dbReference>
<dbReference type="Gene3D" id="3.40.50.360">
    <property type="match status" value="1"/>
</dbReference>
<dbReference type="Gene3D" id="3.90.1010.20">
    <property type="match status" value="1"/>
</dbReference>
<dbReference type="Gene3D" id="3.50.50.60">
    <property type="entry name" value="FAD/NAD(P)-binding domain"/>
    <property type="match status" value="2"/>
</dbReference>
<dbReference type="Gene3D" id="3.90.700.10">
    <property type="entry name" value="Succinate dehydrogenase/fumarate reductase flavoprotein, catalytic domain"/>
    <property type="match status" value="1"/>
</dbReference>
<dbReference type="InterPro" id="IPR003953">
    <property type="entry name" value="FAD-dep_OxRdtase_2_FAD-bd"/>
</dbReference>
<dbReference type="InterPro" id="IPR050315">
    <property type="entry name" value="FAD-oxidoreductase_2"/>
</dbReference>
<dbReference type="InterPro" id="IPR036188">
    <property type="entry name" value="FAD/NAD-bd_sf"/>
</dbReference>
<dbReference type="InterPro" id="IPR010960">
    <property type="entry name" value="Flavocytochrome_c"/>
</dbReference>
<dbReference type="InterPro" id="IPR029039">
    <property type="entry name" value="Flavoprotein-like_sf"/>
</dbReference>
<dbReference type="InterPro" id="IPR007329">
    <property type="entry name" value="FMN-bd"/>
</dbReference>
<dbReference type="InterPro" id="IPR005025">
    <property type="entry name" value="FMN_Rdtase-like_dom"/>
</dbReference>
<dbReference type="InterPro" id="IPR027477">
    <property type="entry name" value="Succ_DH/fumarate_Rdtase_cat_sf"/>
</dbReference>
<dbReference type="NCBIfam" id="TIGR01813">
    <property type="entry name" value="flavo_cyto_c"/>
    <property type="match status" value="1"/>
</dbReference>
<dbReference type="PANTHER" id="PTHR43400:SF7">
    <property type="entry name" value="FAD-DEPENDENT OXIDOREDUCTASE 2 FAD BINDING DOMAIN-CONTAINING PROTEIN"/>
    <property type="match status" value="1"/>
</dbReference>
<dbReference type="PANTHER" id="PTHR43400">
    <property type="entry name" value="FUMARATE REDUCTASE"/>
    <property type="match status" value="1"/>
</dbReference>
<dbReference type="Pfam" id="PF00890">
    <property type="entry name" value="FAD_binding_2"/>
    <property type="match status" value="2"/>
</dbReference>
<dbReference type="Pfam" id="PF04205">
    <property type="entry name" value="FMN_bind"/>
    <property type="match status" value="1"/>
</dbReference>
<dbReference type="Pfam" id="PF03358">
    <property type="entry name" value="FMN_red"/>
    <property type="match status" value="1"/>
</dbReference>
<dbReference type="SMART" id="SM00900">
    <property type="entry name" value="FMN_bind"/>
    <property type="match status" value="1"/>
</dbReference>
<dbReference type="SUPFAM" id="SSF51905">
    <property type="entry name" value="FAD/NAD(P)-binding domain"/>
    <property type="match status" value="1"/>
</dbReference>
<dbReference type="SUPFAM" id="SSF52218">
    <property type="entry name" value="Flavoproteins"/>
    <property type="match status" value="1"/>
</dbReference>
<dbReference type="SUPFAM" id="SSF56425">
    <property type="entry name" value="Succinate dehydrogenase/fumarate reductase flavoprotein, catalytic domain"/>
    <property type="match status" value="1"/>
</dbReference>
<proteinExistence type="evidence at protein level"/>
<organism>
    <name type="scientific">Vibrio ruber (strain DSM 16370 / JCM 11486 / BCRC 17186 / CECT 7878 / LMG 23124 / VR1)</name>
    <dbReference type="NCBI Taxonomy" id="1123498"/>
    <lineage>
        <taxon>Bacteria</taxon>
        <taxon>Pseudomonadati</taxon>
        <taxon>Pseudomonadota</taxon>
        <taxon>Gammaproteobacteria</taxon>
        <taxon>Vibrionales</taxon>
        <taxon>Vibrionaceae</taxon>
        <taxon>Vibrio</taxon>
    </lineage>
</organism>
<protein>
    <recommendedName>
        <fullName evidence="4">NADH:(hydroxy)cinnamate reductase subunit CrdB</fullName>
        <ecNumber evidence="3">1.3.1.-</ecNumber>
    </recommendedName>
    <alternativeName>
        <fullName evidence="4">NADH:cinnamate reductase subunit CrdB</fullName>
    </alternativeName>
</protein>
<comment type="function">
    <text evidence="3">Component of the NADH:(hydroxy)cinnamate reductase Crd that catalyzes the reduction of the double bond in cinnamate, p-coumarate, caffeate, and ferulate under anaerobic conditions with NADH or methyl viologen as the electron donor. Is moderately active against acrylate and practically inactive against urocanate, fumarate, methacrylate and crotonate. CrdB is the catalytic subunit that binds substrates. Is likely involved in protecting V.ruber from (hydroxy)cinnamate poisoning.</text>
</comment>
<comment type="catalytic activity">
    <reaction evidence="3">
        <text>3-phenylpropanoate + NAD(+) = (E)-cinnamate + NADH + H(+)</text>
        <dbReference type="Rhea" id="RHEA:50944"/>
        <dbReference type="ChEBI" id="CHEBI:15378"/>
        <dbReference type="ChEBI" id="CHEBI:15669"/>
        <dbReference type="ChEBI" id="CHEBI:51057"/>
        <dbReference type="ChEBI" id="CHEBI:57540"/>
        <dbReference type="ChEBI" id="CHEBI:57945"/>
    </reaction>
    <physiologicalReaction direction="right-to-left" evidence="6">
        <dbReference type="Rhea" id="RHEA:50946"/>
    </physiologicalReaction>
</comment>
<comment type="catalytic activity">
    <reaction evidence="3">
        <text>3-(3,4-dihydroxyphenyl)propanoate + NAD(+) = (E)-caffeate + NADH + H(+)</text>
        <dbReference type="Rhea" id="RHEA:79503"/>
        <dbReference type="ChEBI" id="CHEBI:15378"/>
        <dbReference type="ChEBI" id="CHEBI:57540"/>
        <dbReference type="ChEBI" id="CHEBI:57770"/>
        <dbReference type="ChEBI" id="CHEBI:57945"/>
        <dbReference type="ChEBI" id="CHEBI:58744"/>
    </reaction>
    <physiologicalReaction direction="right-to-left" evidence="6">
        <dbReference type="Rhea" id="RHEA:79505"/>
    </physiologicalReaction>
</comment>
<comment type="catalytic activity">
    <reaction evidence="3">
        <text>phloretate + NAD(+) = (E)-4-coumarate + NADH + H(+)</text>
        <dbReference type="Rhea" id="RHEA:79507"/>
        <dbReference type="ChEBI" id="CHEBI:12876"/>
        <dbReference type="ChEBI" id="CHEBI:15378"/>
        <dbReference type="ChEBI" id="CHEBI:16331"/>
        <dbReference type="ChEBI" id="CHEBI:57540"/>
        <dbReference type="ChEBI" id="CHEBI:57945"/>
    </reaction>
    <physiologicalReaction direction="right-to-left" evidence="6">
        <dbReference type="Rhea" id="RHEA:79509"/>
    </physiologicalReaction>
</comment>
<comment type="catalytic activity">
    <reaction evidence="3">
        <text>dihydroferulate + NAD(+) = (E)-ferulate + NADH + H(+)</text>
        <dbReference type="Rhea" id="RHEA:79511"/>
        <dbReference type="ChEBI" id="CHEBI:15378"/>
        <dbReference type="ChEBI" id="CHEBI:29749"/>
        <dbReference type="ChEBI" id="CHEBI:57540"/>
        <dbReference type="ChEBI" id="CHEBI:57945"/>
        <dbReference type="ChEBI" id="CHEBI:133751"/>
    </reaction>
    <physiologicalReaction direction="right-to-left" evidence="6">
        <dbReference type="Rhea" id="RHEA:79513"/>
    </physiologicalReaction>
</comment>
<comment type="cofactor">
    <cofactor evidence="3">
        <name>FAD</name>
        <dbReference type="ChEBI" id="CHEBI:57692"/>
    </cofactor>
    <text evidence="3">Binds 1 FAD per subunit.</text>
</comment>
<comment type="cofactor">
    <cofactor evidence="3">
        <name>FMN</name>
        <dbReference type="ChEBI" id="CHEBI:58210"/>
    </cofactor>
    <text evidence="3">Binds 2 FMN per subunit, one is bound covalently and the other non-covalently.</text>
</comment>
<comment type="activity regulation">
    <text evidence="3">Is inactivated by molecular oxygen, allowing regulation of Crd activity by medium oxygen level.</text>
</comment>
<comment type="biophysicochemical properties">
    <kinetics>
        <KM evidence="3">2.2 uM for (E)-caffeate</KM>
        <KM evidence="3">2.4 uM for (E)-4-coumarate</KM>
        <KM evidence="3">2.8 uM for (E)-ferulate</KM>
        <KM evidence="3">7.1 uM for (E)-cinnamate</KM>
        <KM evidence="3">770 uM for acrylate</KM>
        <text evidence="3">kcat is 47 sec(-1) with (E)-caffeate as substrate and methyl viologen as the electron donor. kcat is 45 sec(-1) with (E)-4-coumarate as substrate and methyl viologen as the electron donor. kcat is 26 sec(-1) with (E)-ferulate as substrate and methyl viologen as the electron donor. kcat is 22 sec(-1) with (E)-cinnamate as substrate and methyl viologen as the electron donor. kcat is 1.3 sec(-1) with acrylate as substrate and methyl viologen as the electron donor.</text>
    </kinetics>
</comment>
<comment type="subunit">
    <text evidence="3">NADH:(hydroxy)cinnamate reductase Crd is a heterodimer composed of CrdA and CrdB subunits, encoded by adjacent genes.</text>
</comment>
<comment type="induction">
    <text evidence="3">Highly up-regulated in the presence of cinnamate, under both aerobic and anaerobic conditions. Is also induced by p-coumarate, caffeate, and ferulate under anaerobic conditions.</text>
</comment>
<comment type="domain">
    <text evidence="6">Consists of three domains. The first domain (NADH:flavin or FMN_red, PF03358) carries a non-covalently bound FMN and is used for NADH oxidation. The second, FMN_bind domain (PF04205) contains a covalently bound FMN, that acts as an electron carrier between the two other domains. The C-terminal FAD_binding_2 domain (PF00890) contains a non-covalently bound FAD and forms a site for substrate reduction.</text>
</comment>
<comment type="PTM">
    <text evidence="3">Is flavinylated on Ser-257 by ApbE, encoded in a neighboring gene. Covalent attachment of FMN is essential for catalytic activity.</text>
</comment>
<comment type="similarity">
    <text evidence="5">Belongs to the FAD-dependent oxidoreductase 2 family. FRD/SDH subfamily.</text>
</comment>